<accession>P55576</accession>
<feature type="chain" id="PRO_0000105827" description="Uncharacterized HTH-type transcriptional regulator y4mQ">
    <location>
        <begin position="1"/>
        <end position="298"/>
    </location>
</feature>
<feature type="domain" description="HTH lysR-type" evidence="1">
    <location>
        <begin position="5"/>
        <end position="62"/>
    </location>
</feature>
<feature type="DNA-binding region" description="H-T-H motif" evidence="1">
    <location>
        <begin position="22"/>
        <end position="42"/>
    </location>
</feature>
<sequence>MLQTTSLSAMRIFEAAARLGSFRAAAEELNLSPSAVSHAIMRLERDLGVALFERTTRSVSLTVAGQTLLNHASNAFEELRRGVEQISSNKAQLLRLHCAPSFAAQVLSPRLPQFLKENPGIEVRVAASTNYARFVDGLFDADIVYGEPLNREDLIVIPLSEEIVLPLCAPDLAHQIKSPRDLFHQPLIRSDLKRIQWIDWFEANDLGPPPSPSMSFDRSFLAVDAAVNGLGIALESDVLARRELESGKLVRPLHRICRDNRYIGHYLAYPKSGSQRRLARAFADWLTRECQPASTGSE</sequence>
<dbReference type="EMBL" id="U00090">
    <property type="protein sequence ID" value="AAB91780.1"/>
    <property type="molecule type" value="Genomic_DNA"/>
</dbReference>
<dbReference type="RefSeq" id="NP_443983.1">
    <property type="nucleotide sequence ID" value="NC_000914.2"/>
</dbReference>
<dbReference type="RefSeq" id="WP_010875267.1">
    <property type="nucleotide sequence ID" value="NC_000914.2"/>
</dbReference>
<dbReference type="SMR" id="P55576"/>
<dbReference type="KEGG" id="rhi:NGR_a02420"/>
<dbReference type="PATRIC" id="fig|394.7.peg.252"/>
<dbReference type="eggNOG" id="COG0583">
    <property type="taxonomic scope" value="Bacteria"/>
</dbReference>
<dbReference type="HOGENOM" id="CLU_039613_37_1_5"/>
<dbReference type="OrthoDB" id="9793571at2"/>
<dbReference type="Proteomes" id="UP000001054">
    <property type="component" value="Plasmid pNGR234a"/>
</dbReference>
<dbReference type="GO" id="GO:0003700">
    <property type="term" value="F:DNA-binding transcription factor activity"/>
    <property type="evidence" value="ECO:0007669"/>
    <property type="project" value="InterPro"/>
</dbReference>
<dbReference type="GO" id="GO:0043565">
    <property type="term" value="F:sequence-specific DNA binding"/>
    <property type="evidence" value="ECO:0007669"/>
    <property type="project" value="TreeGrafter"/>
</dbReference>
<dbReference type="GO" id="GO:0006351">
    <property type="term" value="P:DNA-templated transcription"/>
    <property type="evidence" value="ECO:0007669"/>
    <property type="project" value="TreeGrafter"/>
</dbReference>
<dbReference type="CDD" id="cd08432">
    <property type="entry name" value="PBP2_GcdR_TrpI_HvrB_AmpR_like"/>
    <property type="match status" value="1"/>
</dbReference>
<dbReference type="FunFam" id="1.10.10.10:FF:000001">
    <property type="entry name" value="LysR family transcriptional regulator"/>
    <property type="match status" value="1"/>
</dbReference>
<dbReference type="Gene3D" id="3.40.190.10">
    <property type="entry name" value="Periplasmic binding protein-like II"/>
    <property type="match status" value="2"/>
</dbReference>
<dbReference type="Gene3D" id="1.10.10.10">
    <property type="entry name" value="Winged helix-like DNA-binding domain superfamily/Winged helix DNA-binding domain"/>
    <property type="match status" value="1"/>
</dbReference>
<dbReference type="InterPro" id="IPR005119">
    <property type="entry name" value="LysR_subst-bd"/>
</dbReference>
<dbReference type="InterPro" id="IPR000847">
    <property type="entry name" value="Tscrpt_reg_HTH_LysR"/>
</dbReference>
<dbReference type="InterPro" id="IPR036388">
    <property type="entry name" value="WH-like_DNA-bd_sf"/>
</dbReference>
<dbReference type="InterPro" id="IPR036390">
    <property type="entry name" value="WH_DNA-bd_sf"/>
</dbReference>
<dbReference type="PANTHER" id="PTHR30537">
    <property type="entry name" value="HTH-TYPE TRANSCRIPTIONAL REGULATOR"/>
    <property type="match status" value="1"/>
</dbReference>
<dbReference type="PANTHER" id="PTHR30537:SF58">
    <property type="entry name" value="HTH-TYPE TRANSCRIPTIONAL REGULATOR PERR"/>
    <property type="match status" value="1"/>
</dbReference>
<dbReference type="Pfam" id="PF00126">
    <property type="entry name" value="HTH_1"/>
    <property type="match status" value="1"/>
</dbReference>
<dbReference type="Pfam" id="PF03466">
    <property type="entry name" value="LysR_substrate"/>
    <property type="match status" value="1"/>
</dbReference>
<dbReference type="PRINTS" id="PR00039">
    <property type="entry name" value="HTHLYSR"/>
</dbReference>
<dbReference type="SUPFAM" id="SSF53850">
    <property type="entry name" value="Periplasmic binding protein-like II"/>
    <property type="match status" value="1"/>
</dbReference>
<dbReference type="SUPFAM" id="SSF46785">
    <property type="entry name" value="Winged helix' DNA-binding domain"/>
    <property type="match status" value="1"/>
</dbReference>
<dbReference type="PROSITE" id="PS50931">
    <property type="entry name" value="HTH_LYSR"/>
    <property type="match status" value="1"/>
</dbReference>
<protein>
    <recommendedName>
        <fullName>Uncharacterized HTH-type transcriptional regulator y4mQ</fullName>
    </recommendedName>
</protein>
<gene>
    <name type="ordered locus">NGR_a02420</name>
    <name type="ORF">y4mQ</name>
</gene>
<name>Y4MQ_SINFN</name>
<proteinExistence type="inferred from homology"/>
<geneLocation type="plasmid">
    <name>sym pNGR234a</name>
</geneLocation>
<comment type="similarity">
    <text evidence="2">Belongs to the LysR transcriptional regulatory family.</text>
</comment>
<keyword id="KW-0238">DNA-binding</keyword>
<keyword id="KW-0614">Plasmid</keyword>
<keyword id="KW-1185">Reference proteome</keyword>
<keyword id="KW-0804">Transcription</keyword>
<keyword id="KW-0805">Transcription regulation</keyword>
<organism>
    <name type="scientific">Sinorhizobium fredii (strain NBRC 101917 / NGR234)</name>
    <dbReference type="NCBI Taxonomy" id="394"/>
    <lineage>
        <taxon>Bacteria</taxon>
        <taxon>Pseudomonadati</taxon>
        <taxon>Pseudomonadota</taxon>
        <taxon>Alphaproteobacteria</taxon>
        <taxon>Hyphomicrobiales</taxon>
        <taxon>Rhizobiaceae</taxon>
        <taxon>Sinorhizobium/Ensifer group</taxon>
        <taxon>Sinorhizobium</taxon>
    </lineage>
</organism>
<evidence type="ECO:0000255" key="1">
    <source>
        <dbReference type="PROSITE-ProRule" id="PRU00253"/>
    </source>
</evidence>
<evidence type="ECO:0000305" key="2"/>
<reference key="1">
    <citation type="journal article" date="1997" name="Nature">
        <title>Molecular basis of symbiosis between Rhizobium and legumes.</title>
        <authorList>
            <person name="Freiberg C.A."/>
            <person name="Fellay R."/>
            <person name="Bairoch A."/>
            <person name="Broughton W.J."/>
            <person name="Rosenthal A."/>
            <person name="Perret X."/>
        </authorList>
    </citation>
    <scope>NUCLEOTIDE SEQUENCE [LARGE SCALE GENOMIC DNA]</scope>
    <source>
        <strain>NBRC 101917 / NGR234</strain>
    </source>
</reference>
<reference key="2">
    <citation type="journal article" date="2009" name="Appl. Environ. Microbiol.">
        <title>Rhizobium sp. strain NGR234 possesses a remarkable number of secretion systems.</title>
        <authorList>
            <person name="Schmeisser C."/>
            <person name="Liesegang H."/>
            <person name="Krysciak D."/>
            <person name="Bakkou N."/>
            <person name="Le Quere A."/>
            <person name="Wollherr A."/>
            <person name="Heinemeyer I."/>
            <person name="Morgenstern B."/>
            <person name="Pommerening-Roeser A."/>
            <person name="Flores M."/>
            <person name="Palacios R."/>
            <person name="Brenner S."/>
            <person name="Gottschalk G."/>
            <person name="Schmitz R.A."/>
            <person name="Broughton W.J."/>
            <person name="Perret X."/>
            <person name="Strittmatter A.W."/>
            <person name="Streit W.R."/>
        </authorList>
    </citation>
    <scope>NUCLEOTIDE SEQUENCE [LARGE SCALE GENOMIC DNA]</scope>
    <source>
        <strain>NBRC 101917 / NGR234</strain>
    </source>
</reference>